<proteinExistence type="inferred from homology"/>
<comment type="catalytic activity">
    <reaction evidence="1">
        <text>uridine + ATP = UMP + ADP + H(+)</text>
        <dbReference type="Rhea" id="RHEA:16825"/>
        <dbReference type="ChEBI" id="CHEBI:15378"/>
        <dbReference type="ChEBI" id="CHEBI:16704"/>
        <dbReference type="ChEBI" id="CHEBI:30616"/>
        <dbReference type="ChEBI" id="CHEBI:57865"/>
        <dbReference type="ChEBI" id="CHEBI:456216"/>
        <dbReference type="EC" id="2.7.1.48"/>
    </reaction>
</comment>
<comment type="catalytic activity">
    <reaction evidence="1">
        <text>cytidine + ATP = CMP + ADP + H(+)</text>
        <dbReference type="Rhea" id="RHEA:24674"/>
        <dbReference type="ChEBI" id="CHEBI:15378"/>
        <dbReference type="ChEBI" id="CHEBI:17562"/>
        <dbReference type="ChEBI" id="CHEBI:30616"/>
        <dbReference type="ChEBI" id="CHEBI:60377"/>
        <dbReference type="ChEBI" id="CHEBI:456216"/>
        <dbReference type="EC" id="2.7.1.48"/>
    </reaction>
</comment>
<comment type="pathway">
    <text evidence="1">Pyrimidine metabolism; CTP biosynthesis via salvage pathway; CTP from cytidine: step 1/3.</text>
</comment>
<comment type="pathway">
    <text evidence="1">Pyrimidine metabolism; UMP biosynthesis via salvage pathway; UMP from uridine: step 1/1.</text>
</comment>
<comment type="subcellular location">
    <subcellularLocation>
        <location evidence="1">Cytoplasm</location>
    </subcellularLocation>
</comment>
<comment type="similarity">
    <text evidence="1">Belongs to the uridine kinase family.</text>
</comment>
<gene>
    <name evidence="1" type="primary">udk</name>
    <name type="ordered locus">SNSL254_A2305</name>
</gene>
<reference key="1">
    <citation type="journal article" date="2011" name="J. Bacteriol.">
        <title>Comparative genomics of 28 Salmonella enterica isolates: evidence for CRISPR-mediated adaptive sublineage evolution.</title>
        <authorList>
            <person name="Fricke W.F."/>
            <person name="Mammel M.K."/>
            <person name="McDermott P.F."/>
            <person name="Tartera C."/>
            <person name="White D.G."/>
            <person name="Leclerc J.E."/>
            <person name="Ravel J."/>
            <person name="Cebula T.A."/>
        </authorList>
    </citation>
    <scope>NUCLEOTIDE SEQUENCE [LARGE SCALE GENOMIC DNA]</scope>
    <source>
        <strain>SL254</strain>
    </source>
</reference>
<accession>B4SXV3</accession>
<organism>
    <name type="scientific">Salmonella newport (strain SL254)</name>
    <dbReference type="NCBI Taxonomy" id="423368"/>
    <lineage>
        <taxon>Bacteria</taxon>
        <taxon>Pseudomonadati</taxon>
        <taxon>Pseudomonadota</taxon>
        <taxon>Gammaproteobacteria</taxon>
        <taxon>Enterobacterales</taxon>
        <taxon>Enterobacteriaceae</taxon>
        <taxon>Salmonella</taxon>
    </lineage>
</organism>
<name>URK_SALNS</name>
<dbReference type="EC" id="2.7.1.48" evidence="1"/>
<dbReference type="EMBL" id="CP001113">
    <property type="protein sequence ID" value="ACF64924.1"/>
    <property type="molecule type" value="Genomic_DNA"/>
</dbReference>
<dbReference type="RefSeq" id="WP_000132080.1">
    <property type="nucleotide sequence ID" value="NZ_CCMR01000002.1"/>
</dbReference>
<dbReference type="SMR" id="B4SXV3"/>
<dbReference type="KEGG" id="see:SNSL254_A2305"/>
<dbReference type="HOGENOM" id="CLU_021278_1_2_6"/>
<dbReference type="UniPathway" id="UPA00574">
    <property type="reaction ID" value="UER00637"/>
</dbReference>
<dbReference type="UniPathway" id="UPA00579">
    <property type="reaction ID" value="UER00640"/>
</dbReference>
<dbReference type="Proteomes" id="UP000008824">
    <property type="component" value="Chromosome"/>
</dbReference>
<dbReference type="GO" id="GO:0005737">
    <property type="term" value="C:cytoplasm"/>
    <property type="evidence" value="ECO:0007669"/>
    <property type="project" value="UniProtKB-SubCell"/>
</dbReference>
<dbReference type="GO" id="GO:0005524">
    <property type="term" value="F:ATP binding"/>
    <property type="evidence" value="ECO:0007669"/>
    <property type="project" value="UniProtKB-UniRule"/>
</dbReference>
<dbReference type="GO" id="GO:0043771">
    <property type="term" value="F:cytidine kinase activity"/>
    <property type="evidence" value="ECO:0007669"/>
    <property type="project" value="RHEA"/>
</dbReference>
<dbReference type="GO" id="GO:0004849">
    <property type="term" value="F:uridine kinase activity"/>
    <property type="evidence" value="ECO:0007669"/>
    <property type="project" value="UniProtKB-UniRule"/>
</dbReference>
<dbReference type="GO" id="GO:0044211">
    <property type="term" value="P:CTP salvage"/>
    <property type="evidence" value="ECO:0007669"/>
    <property type="project" value="UniProtKB-UniRule"/>
</dbReference>
<dbReference type="GO" id="GO:0044206">
    <property type="term" value="P:UMP salvage"/>
    <property type="evidence" value="ECO:0007669"/>
    <property type="project" value="UniProtKB-UniRule"/>
</dbReference>
<dbReference type="CDD" id="cd02023">
    <property type="entry name" value="UMPK"/>
    <property type="match status" value="1"/>
</dbReference>
<dbReference type="FunFam" id="3.40.50.300:FF:000252">
    <property type="entry name" value="Uridine kinase"/>
    <property type="match status" value="1"/>
</dbReference>
<dbReference type="Gene3D" id="3.40.50.300">
    <property type="entry name" value="P-loop containing nucleotide triphosphate hydrolases"/>
    <property type="match status" value="1"/>
</dbReference>
<dbReference type="HAMAP" id="MF_00551">
    <property type="entry name" value="Uridine_kinase"/>
    <property type="match status" value="1"/>
</dbReference>
<dbReference type="InterPro" id="IPR027417">
    <property type="entry name" value="P-loop_NTPase"/>
</dbReference>
<dbReference type="InterPro" id="IPR006083">
    <property type="entry name" value="PRK/URK"/>
</dbReference>
<dbReference type="InterPro" id="IPR026008">
    <property type="entry name" value="Uridine_kinase"/>
</dbReference>
<dbReference type="InterPro" id="IPR000764">
    <property type="entry name" value="Uridine_kinase-like"/>
</dbReference>
<dbReference type="NCBIfam" id="NF004018">
    <property type="entry name" value="PRK05480.1"/>
    <property type="match status" value="1"/>
</dbReference>
<dbReference type="NCBIfam" id="TIGR00235">
    <property type="entry name" value="udk"/>
    <property type="match status" value="1"/>
</dbReference>
<dbReference type="PANTHER" id="PTHR10285">
    <property type="entry name" value="URIDINE KINASE"/>
    <property type="match status" value="1"/>
</dbReference>
<dbReference type="Pfam" id="PF00485">
    <property type="entry name" value="PRK"/>
    <property type="match status" value="1"/>
</dbReference>
<dbReference type="PRINTS" id="PR00988">
    <property type="entry name" value="URIDINKINASE"/>
</dbReference>
<dbReference type="SUPFAM" id="SSF52540">
    <property type="entry name" value="P-loop containing nucleoside triphosphate hydrolases"/>
    <property type="match status" value="1"/>
</dbReference>
<protein>
    <recommendedName>
        <fullName evidence="1">Uridine kinase</fullName>
        <ecNumber evidence="1">2.7.1.48</ecNumber>
    </recommendedName>
    <alternativeName>
        <fullName evidence="1">Cytidine monophosphokinase</fullName>
    </alternativeName>
    <alternativeName>
        <fullName evidence="1">Uridine monophosphokinase</fullName>
    </alternativeName>
</protein>
<feature type="chain" id="PRO_1000129086" description="Uridine kinase">
    <location>
        <begin position="1"/>
        <end position="213"/>
    </location>
</feature>
<feature type="binding site" evidence="1">
    <location>
        <begin position="15"/>
        <end position="22"/>
    </location>
    <ligand>
        <name>ATP</name>
        <dbReference type="ChEBI" id="CHEBI:30616"/>
    </ligand>
</feature>
<keyword id="KW-0067">ATP-binding</keyword>
<keyword id="KW-0963">Cytoplasm</keyword>
<keyword id="KW-0418">Kinase</keyword>
<keyword id="KW-0547">Nucleotide-binding</keyword>
<keyword id="KW-0808">Transferase</keyword>
<evidence type="ECO:0000255" key="1">
    <source>
        <dbReference type="HAMAP-Rule" id="MF_00551"/>
    </source>
</evidence>
<sequence>MTDQSHQCVIIGIAGASASGKSLIASTLYRELREQVGDEHIGVIPEDSYYKDQSHLSMEERVKTNYDHPNAMDHSLLFLHLQALKRGSAIELPVYSYVEHTRMQETVRVEPKKVIILEGILLLTDARLREEMNFSIFVDTPLDICLMRRIKRDVNERGRSMDSVMAQYQKTVRPMFLQFIEPSKQYADIIVPRGGKNRIAIDILKAKISQFFE</sequence>